<protein>
    <recommendedName>
        <fullName>Ran-binding protein 9</fullName>
        <shortName>RanBP9</shortName>
    </recommendedName>
    <alternativeName>
        <fullName>Ran-binding protein 10</fullName>
        <shortName>RanBP10</shortName>
    </alternativeName>
    <alternativeName>
        <fullName>Ran-binding protein M</fullName>
        <shortName>RanBPM</shortName>
    </alternativeName>
</protein>
<dbReference type="EMBL" id="CR761896">
    <property type="protein sequence ID" value="CAJ83297.1"/>
    <property type="molecule type" value="mRNA"/>
</dbReference>
<dbReference type="RefSeq" id="NP_001037977.1">
    <property type="nucleotide sequence ID" value="NM_001044512.1"/>
</dbReference>
<dbReference type="SMR" id="Q28FM1"/>
<dbReference type="FunCoup" id="Q28FM1">
    <property type="interactions" value="3859"/>
</dbReference>
<dbReference type="STRING" id="8364.ENSXETP00000020490"/>
<dbReference type="PaxDb" id="8364-ENSXETP00000004846"/>
<dbReference type="GeneID" id="733762"/>
<dbReference type="KEGG" id="xtr:733762"/>
<dbReference type="AGR" id="Xenbase:XB-GENE-494852"/>
<dbReference type="CTD" id="10048"/>
<dbReference type="Xenbase" id="XB-GENE-494852">
    <property type="gene designation" value="ranbp9"/>
</dbReference>
<dbReference type="eggNOG" id="KOG1477">
    <property type="taxonomic scope" value="Eukaryota"/>
</dbReference>
<dbReference type="HOGENOM" id="CLU_009129_4_1_1"/>
<dbReference type="InParanoid" id="Q28FM1"/>
<dbReference type="OMA" id="YGQQLRM"/>
<dbReference type="OrthoDB" id="25503at2759"/>
<dbReference type="PhylomeDB" id="Q28FM1"/>
<dbReference type="TreeFam" id="TF331658"/>
<dbReference type="Reactome" id="R-XTR-373760">
    <property type="pathway name" value="L1CAM interactions"/>
</dbReference>
<dbReference type="Reactome" id="R-XTR-5673001">
    <property type="pathway name" value="RAF/MAP kinase cascade"/>
</dbReference>
<dbReference type="Reactome" id="R-XTR-8851805">
    <property type="pathway name" value="MET activates RAS signaling"/>
</dbReference>
<dbReference type="Reactome" id="R-XTR-9861718">
    <property type="pathway name" value="Regulation of pyruvate metabolism"/>
</dbReference>
<dbReference type="Proteomes" id="UP000008143">
    <property type="component" value="Chromosome 6"/>
</dbReference>
<dbReference type="ExpressionAtlas" id="Q28FM1">
    <property type="expression patterns" value="baseline"/>
</dbReference>
<dbReference type="GO" id="GO:0005737">
    <property type="term" value="C:cytoplasm"/>
    <property type="evidence" value="ECO:0000250"/>
    <property type="project" value="UniProtKB"/>
</dbReference>
<dbReference type="GO" id="GO:0005634">
    <property type="term" value="C:nucleus"/>
    <property type="evidence" value="ECO:0000250"/>
    <property type="project" value="UniProtKB"/>
</dbReference>
<dbReference type="GO" id="GO:0005886">
    <property type="term" value="C:plasma membrane"/>
    <property type="evidence" value="ECO:0007669"/>
    <property type="project" value="UniProtKB-SubCell"/>
</dbReference>
<dbReference type="CDD" id="cd12909">
    <property type="entry name" value="SPRY_RanBP9_10"/>
    <property type="match status" value="1"/>
</dbReference>
<dbReference type="FunFam" id="2.60.120.920:FF:000011">
    <property type="entry name" value="RAN binding protein 10"/>
    <property type="match status" value="1"/>
</dbReference>
<dbReference type="Gene3D" id="2.60.120.920">
    <property type="match status" value="1"/>
</dbReference>
<dbReference type="InterPro" id="IPR001870">
    <property type="entry name" value="B30.2/SPRY"/>
</dbReference>
<dbReference type="InterPro" id="IPR043136">
    <property type="entry name" value="B30.2/SPRY_sf"/>
</dbReference>
<dbReference type="InterPro" id="IPR013320">
    <property type="entry name" value="ConA-like_dom_sf"/>
</dbReference>
<dbReference type="InterPro" id="IPR013144">
    <property type="entry name" value="CRA_dom"/>
</dbReference>
<dbReference type="InterPro" id="IPR024964">
    <property type="entry name" value="CTLH/CRA"/>
</dbReference>
<dbReference type="InterPro" id="IPR006595">
    <property type="entry name" value="CTLH_C"/>
</dbReference>
<dbReference type="InterPro" id="IPR006594">
    <property type="entry name" value="LisH"/>
</dbReference>
<dbReference type="InterPro" id="IPR003877">
    <property type="entry name" value="SPRY_dom"/>
</dbReference>
<dbReference type="InterPro" id="IPR035782">
    <property type="entry name" value="SPRY_RanBP9/10"/>
</dbReference>
<dbReference type="InterPro" id="IPR050618">
    <property type="entry name" value="Ubq-SigPath_Reg"/>
</dbReference>
<dbReference type="PANTHER" id="PTHR12864">
    <property type="entry name" value="RAN BINDING PROTEIN 9-RELATED"/>
    <property type="match status" value="1"/>
</dbReference>
<dbReference type="Pfam" id="PF10607">
    <property type="entry name" value="CTLH"/>
    <property type="match status" value="2"/>
</dbReference>
<dbReference type="Pfam" id="PF08513">
    <property type="entry name" value="LisH"/>
    <property type="match status" value="1"/>
</dbReference>
<dbReference type="Pfam" id="PF00622">
    <property type="entry name" value="SPRY"/>
    <property type="match status" value="1"/>
</dbReference>
<dbReference type="SMART" id="SM00757">
    <property type="entry name" value="CRA"/>
    <property type="match status" value="1"/>
</dbReference>
<dbReference type="SMART" id="SM00668">
    <property type="entry name" value="CTLH"/>
    <property type="match status" value="1"/>
</dbReference>
<dbReference type="SMART" id="SM00667">
    <property type="entry name" value="LisH"/>
    <property type="match status" value="1"/>
</dbReference>
<dbReference type="SMART" id="SM00449">
    <property type="entry name" value="SPRY"/>
    <property type="match status" value="1"/>
</dbReference>
<dbReference type="SUPFAM" id="SSF49899">
    <property type="entry name" value="Concanavalin A-like lectins/glucanases"/>
    <property type="match status" value="1"/>
</dbReference>
<dbReference type="PROSITE" id="PS50188">
    <property type="entry name" value="B302_SPRY"/>
    <property type="match status" value="1"/>
</dbReference>
<dbReference type="PROSITE" id="PS50897">
    <property type="entry name" value="CTLH"/>
    <property type="match status" value="1"/>
</dbReference>
<dbReference type="PROSITE" id="PS50896">
    <property type="entry name" value="LISH"/>
    <property type="match status" value="1"/>
</dbReference>
<gene>
    <name type="primary">ranbp9</name>
    <name type="synonym">ranbp10</name>
    <name type="synonym">ranbpm</name>
    <name type="ORF">TNeu108a21.1</name>
</gene>
<proteinExistence type="evidence at transcript level"/>
<comment type="function">
    <text evidence="2">May act as scaffolding protein, and as adapter protein to couple membrane receptors to intracellular signaling pathways. Acts as a mediator of cell spreading and actin cytoskeleton rearrangement. Core component of the CTLH E3 ubiquitin-protein ligase complex that mediates ubiquitination and subsequent proteasomal degradation of target proteins.</text>
</comment>
<comment type="subunit">
    <text evidence="2">Identified in the CTLH complex that contains at least MAEA, RMND5A (or alternatively its paralog RMND5B), GID8, WDR26, and RANBP9 and/or RANBP10.</text>
</comment>
<comment type="subcellular location">
    <subcellularLocation>
        <location evidence="1">Cytoplasm</location>
    </subcellularLocation>
    <subcellularLocation>
        <location evidence="1">Cell membrane</location>
        <topology evidence="1">Peripheral membrane protein</topology>
        <orientation evidence="1">Cytoplasmic side</orientation>
    </subcellularLocation>
    <subcellularLocation>
        <location evidence="1">Nucleus</location>
    </subcellularLocation>
    <text evidence="1">Predominantly cytoplasmic.</text>
</comment>
<comment type="similarity">
    <text evidence="7">Belongs to the RANBP9/10 family.</text>
</comment>
<organism>
    <name type="scientific">Xenopus tropicalis</name>
    <name type="common">Western clawed frog</name>
    <name type="synonym">Silurana tropicalis</name>
    <dbReference type="NCBI Taxonomy" id="8364"/>
    <lineage>
        <taxon>Eukaryota</taxon>
        <taxon>Metazoa</taxon>
        <taxon>Chordata</taxon>
        <taxon>Craniata</taxon>
        <taxon>Vertebrata</taxon>
        <taxon>Euteleostomi</taxon>
        <taxon>Amphibia</taxon>
        <taxon>Batrachia</taxon>
        <taxon>Anura</taxon>
        <taxon>Pipoidea</taxon>
        <taxon>Pipidae</taxon>
        <taxon>Xenopodinae</taxon>
        <taxon>Xenopus</taxon>
        <taxon>Silurana</taxon>
    </lineage>
</organism>
<evidence type="ECO:0000250" key="1">
    <source>
        <dbReference type="UniProtKB" id="P69566"/>
    </source>
</evidence>
<evidence type="ECO:0000250" key="2">
    <source>
        <dbReference type="UniProtKB" id="Q96S59"/>
    </source>
</evidence>
<evidence type="ECO:0000255" key="3">
    <source>
        <dbReference type="PROSITE-ProRule" id="PRU00058"/>
    </source>
</evidence>
<evidence type="ECO:0000255" key="4">
    <source>
        <dbReference type="PROSITE-ProRule" id="PRU00126"/>
    </source>
</evidence>
<evidence type="ECO:0000255" key="5">
    <source>
        <dbReference type="PROSITE-ProRule" id="PRU00548"/>
    </source>
</evidence>
<evidence type="ECO:0000256" key="6">
    <source>
        <dbReference type="SAM" id="MobiDB-lite"/>
    </source>
</evidence>
<evidence type="ECO:0000305" key="7"/>
<sequence>MSSPPLHGLSSGGHLSRDPPPRSWSPRDKCSYLGLSHGNLRVHYKGHGKTSKDAASVRSTHPIPAACGIFYFEVKIISKGRDGYMGIGLSTQGVNLSRLPGWDKHSYGYHGDDGHSFCSSGTGQPYGPTFTTGDVIGCCVNLIDNTCFYTKNGHSLGIAFTDLPPNLYPTVGLQTPGEVVDANFGQSPFVFDIEDYIREWRTKIQAQIERFPVGGEWQSMIQRMVSSYLVHHGYCSTAEAFAKSTDQTVQEELASIKNRQRIQKLVLSGRMGEAIETTQQLYPSLLERNPNLLFTLKVRQFIEMVNGTDSEVRCLGNRSLKSLDGCSGSDSNCSNGIISNKAHQTHCHSKSQSSNLNVTELNSINMTMSHQLNSYSSNDVEMETDHYSNGFSASTSNGFLNGSSRHEPELEECDTEMEVDTSHGRRQLCGGSQAAVERMICFGRELQAMSEQLRRERGKNATNKNMLKDAFSLLAYSDPWNSPVGYQLDPIQREHVCSSLNSAILDIHNLPKQPPLSLALEQASQCLEMMAQCGIGSCAFARVADYLH</sequence>
<feature type="chain" id="PRO_0000305235" description="Ran-binding protein 9">
    <location>
        <begin position="1"/>
        <end position="548"/>
    </location>
</feature>
<feature type="domain" description="B30.2/SPRY" evidence="5">
    <location>
        <begin position="2"/>
        <end position="189"/>
    </location>
</feature>
<feature type="domain" description="LisH" evidence="4">
    <location>
        <begin position="217"/>
        <end position="249"/>
    </location>
</feature>
<feature type="domain" description="CTLH" evidence="3">
    <location>
        <begin position="255"/>
        <end position="312"/>
    </location>
</feature>
<feature type="region of interest" description="Disordered" evidence="6">
    <location>
        <begin position="1"/>
        <end position="26"/>
    </location>
</feature>
<feature type="compositionally biased region" description="Low complexity" evidence="6">
    <location>
        <begin position="1"/>
        <end position="14"/>
    </location>
</feature>
<feature type="compositionally biased region" description="Basic and acidic residues" evidence="6">
    <location>
        <begin position="15"/>
        <end position="26"/>
    </location>
</feature>
<reference key="1">
    <citation type="submission" date="2006-10" db="EMBL/GenBank/DDBJ databases">
        <authorList>
            <consortium name="Sanger Xenopus tropicalis EST/cDNA project"/>
        </authorList>
    </citation>
    <scope>NUCLEOTIDE SEQUENCE [LARGE SCALE MRNA]</scope>
    <source>
        <tissue>Neurula</tissue>
    </source>
</reference>
<keyword id="KW-1003">Cell membrane</keyword>
<keyword id="KW-0963">Cytoplasm</keyword>
<keyword id="KW-0472">Membrane</keyword>
<keyword id="KW-0539">Nucleus</keyword>
<keyword id="KW-1185">Reference proteome</keyword>
<name>RANB9_XENTR</name>
<accession>Q28FM1</accession>